<accession>C3MR07</accession>
<keyword id="KW-0028">Amino-acid biosynthesis</keyword>
<keyword id="KW-0479">Metal-binding</keyword>
<keyword id="KW-0486">Methionine biosynthesis</keyword>
<keyword id="KW-0489">Methyltransferase</keyword>
<keyword id="KW-0808">Transferase</keyword>
<keyword id="KW-0862">Zinc</keyword>
<proteinExistence type="inferred from homology"/>
<name>METE_SACI2</name>
<dbReference type="EC" id="2.1.1.-" evidence="1"/>
<dbReference type="EMBL" id="CP001399">
    <property type="protein sequence ID" value="ACP35820.1"/>
    <property type="molecule type" value="Genomic_DNA"/>
</dbReference>
<dbReference type="RefSeq" id="WP_012711676.1">
    <property type="nucleotide sequence ID" value="NC_012589.1"/>
</dbReference>
<dbReference type="SMR" id="C3MR07"/>
<dbReference type="KEGG" id="sis:LS215_1824"/>
<dbReference type="HOGENOM" id="CLU_040013_3_2_2"/>
<dbReference type="OrthoDB" id="17656at2157"/>
<dbReference type="UniPathway" id="UPA00051"/>
<dbReference type="Proteomes" id="UP000001747">
    <property type="component" value="Chromosome"/>
</dbReference>
<dbReference type="GO" id="GO:0003871">
    <property type="term" value="F:5-methyltetrahydropteroyltriglutamate-homocysteine S-methyltransferase activity"/>
    <property type="evidence" value="ECO:0007669"/>
    <property type="project" value="InterPro"/>
</dbReference>
<dbReference type="GO" id="GO:0008270">
    <property type="term" value="F:zinc ion binding"/>
    <property type="evidence" value="ECO:0007669"/>
    <property type="project" value="InterPro"/>
</dbReference>
<dbReference type="GO" id="GO:0009086">
    <property type="term" value="P:methionine biosynthetic process"/>
    <property type="evidence" value="ECO:0007669"/>
    <property type="project" value="UniProtKB-UniRule"/>
</dbReference>
<dbReference type="GO" id="GO:0032259">
    <property type="term" value="P:methylation"/>
    <property type="evidence" value="ECO:0007669"/>
    <property type="project" value="UniProtKB-KW"/>
</dbReference>
<dbReference type="CDD" id="cd03311">
    <property type="entry name" value="CIMS_C_terminal_like"/>
    <property type="match status" value="1"/>
</dbReference>
<dbReference type="Gene3D" id="3.20.20.210">
    <property type="match status" value="1"/>
</dbReference>
<dbReference type="HAMAP" id="MF_00288">
    <property type="entry name" value="MetE"/>
    <property type="match status" value="1"/>
</dbReference>
<dbReference type="InterPro" id="IPR002629">
    <property type="entry name" value="Met_Synth_C/arc"/>
</dbReference>
<dbReference type="InterPro" id="IPR022921">
    <property type="entry name" value="MetE_arc"/>
</dbReference>
<dbReference type="InterPro" id="IPR038071">
    <property type="entry name" value="UROD/MetE-like_sf"/>
</dbReference>
<dbReference type="NCBIfam" id="NF003317">
    <property type="entry name" value="PRK04326.1"/>
    <property type="match status" value="1"/>
</dbReference>
<dbReference type="PANTHER" id="PTHR30519">
    <property type="entry name" value="5-METHYLTETRAHYDROPTEROYLTRIGLUTAMATE--HOMOCYSTEINE METHYLTRANSFERASE"/>
    <property type="match status" value="1"/>
</dbReference>
<dbReference type="Pfam" id="PF01717">
    <property type="entry name" value="Meth_synt_2"/>
    <property type="match status" value="1"/>
</dbReference>
<dbReference type="SUPFAM" id="SSF51726">
    <property type="entry name" value="UROD/MetE-like"/>
    <property type="match status" value="1"/>
</dbReference>
<comment type="function">
    <text evidence="1">Catalyzes the transfer of a methyl group to L-homocysteine resulting in methionine formation. The physiological methyl donor is unknown.</text>
</comment>
<comment type="cofactor">
    <cofactor evidence="1">
        <name>Zn(2+)</name>
        <dbReference type="ChEBI" id="CHEBI:29105"/>
    </cofactor>
    <text evidence="1">Binds 1 zinc ion per subunit.</text>
</comment>
<comment type="pathway">
    <text evidence="1">Amino-acid biosynthesis; L-methionine biosynthesis via de novo pathway.</text>
</comment>
<comment type="similarity">
    <text evidence="1 2">Belongs to the archaeal MetE family.</text>
</comment>
<sequence length="332" mass="38258">MSKLPLLPTTVIGSYPRPKWLRESIRLHKAGKISDEDLQEAFNDAVIAVLKDHYNAGVDVPTDGEVRRDEMVEFFAERIKGFKFYGPVRVWGTAYYRKPSVVSKIEYKKPMLVDEFTFAKSVSYTDNLKITITGPYTIAEWSYNEYYKNKKDLVFDLAKAINQEIKNLVEAGAKIIQIDEPALHTRREDVSWGVEAVNEAVKGVNAKLVMHICYGEYSFVAPYLNELKVDQINFAFKIYNYKPLELLKRYGFDKELGAGVIDVHNRRIETSEEVANDIRKILEYFTPEKVWINPDCGLKLLSRKIAYQKLVSMVEGTKVVREELKRKGYSVD</sequence>
<gene>
    <name evidence="1" type="primary">metE</name>
    <name type="ordered locus">LS215_1824</name>
</gene>
<organism>
    <name type="scientific">Saccharolobus islandicus (strain L.S.2.15 / Lassen #1)</name>
    <name type="common">Sulfolobus islandicus</name>
    <dbReference type="NCBI Taxonomy" id="429572"/>
    <lineage>
        <taxon>Archaea</taxon>
        <taxon>Thermoproteota</taxon>
        <taxon>Thermoprotei</taxon>
        <taxon>Sulfolobales</taxon>
        <taxon>Sulfolobaceae</taxon>
        <taxon>Saccharolobus</taxon>
    </lineage>
</organism>
<reference key="1">
    <citation type="journal article" date="2009" name="Proc. Natl. Acad. Sci. U.S.A.">
        <title>Biogeography of the Sulfolobus islandicus pan-genome.</title>
        <authorList>
            <person name="Reno M.L."/>
            <person name="Held N.L."/>
            <person name="Fields C.J."/>
            <person name="Burke P.V."/>
            <person name="Whitaker R.J."/>
        </authorList>
    </citation>
    <scope>NUCLEOTIDE SEQUENCE [LARGE SCALE GENOMIC DNA]</scope>
    <source>
        <strain>L.S.2.15 / Lassen #1</strain>
    </source>
</reference>
<evidence type="ECO:0000255" key="1">
    <source>
        <dbReference type="HAMAP-Rule" id="MF_00288"/>
    </source>
</evidence>
<evidence type="ECO:0000305" key="2"/>
<feature type="chain" id="PRO_1000204855" description="Methionine synthase">
    <location>
        <begin position="1"/>
        <end position="332"/>
    </location>
</feature>
<feature type="binding site" evidence="1">
    <location>
        <position position="211"/>
    </location>
    <ligand>
        <name>Zn(2+)</name>
        <dbReference type="ChEBI" id="CHEBI:29105"/>
        <note>catalytic</note>
    </ligand>
</feature>
<feature type="binding site" evidence="1">
    <location>
        <position position="213"/>
    </location>
    <ligand>
        <name>Zn(2+)</name>
        <dbReference type="ChEBI" id="CHEBI:29105"/>
        <note>catalytic</note>
    </ligand>
</feature>
<feature type="binding site" evidence="1">
    <location>
        <position position="296"/>
    </location>
    <ligand>
        <name>Zn(2+)</name>
        <dbReference type="ChEBI" id="CHEBI:29105"/>
        <note>catalytic</note>
    </ligand>
</feature>
<protein>
    <recommendedName>
        <fullName evidence="1">Methionine synthase</fullName>
        <ecNumber evidence="1">2.1.1.-</ecNumber>
    </recommendedName>
    <alternativeName>
        <fullName evidence="1">Homocysteine methyltransferase</fullName>
    </alternativeName>
</protein>